<sequence length="187" mass="20594">MKNIIFMGPPGAGKGTQAKILCERLSIPQISTGDILREAVKNQTAMGIEAKRYMDAGDLVPDSVVIGIIKDRIREADCKNGFLLDGFPRTVEQAEALDTLLKNEGKSIDKAINLQVPDAELLKRLLGRAEIEGRADDNEVTIKNRLDNYNKKTLPLLDFYATRKKLSQVNGVGSLEEVTSLIQKELA</sequence>
<keyword id="KW-0067">ATP-binding</keyword>
<keyword id="KW-0963">Cytoplasm</keyword>
<keyword id="KW-0418">Kinase</keyword>
<keyword id="KW-0545">Nucleotide biosynthesis</keyword>
<keyword id="KW-0547">Nucleotide-binding</keyword>
<keyword id="KW-1185">Reference proteome</keyword>
<keyword id="KW-0808">Transferase</keyword>
<comment type="function">
    <text evidence="1">Catalyzes the reversible transfer of the terminal phosphate group between ATP and AMP. Plays an important role in cellular energy homeostasis and in adenine nucleotide metabolism.</text>
</comment>
<comment type="catalytic activity">
    <reaction evidence="1">
        <text>AMP + ATP = 2 ADP</text>
        <dbReference type="Rhea" id="RHEA:12973"/>
        <dbReference type="ChEBI" id="CHEBI:30616"/>
        <dbReference type="ChEBI" id="CHEBI:456215"/>
        <dbReference type="ChEBI" id="CHEBI:456216"/>
        <dbReference type="EC" id="2.7.4.3"/>
    </reaction>
</comment>
<comment type="pathway">
    <text evidence="1">Purine metabolism; AMP biosynthesis via salvage pathway; AMP from ADP: step 1/1.</text>
</comment>
<comment type="subunit">
    <text evidence="1">Monomer.</text>
</comment>
<comment type="subcellular location">
    <subcellularLocation>
        <location>Cytoplasm</location>
    </subcellularLocation>
</comment>
<comment type="domain">
    <text evidence="1">Consists of three domains, a large central CORE domain and two small peripheral domains, NMPbind and LID, which undergo movements during catalysis. The LID domain closes over the site of phosphoryl transfer upon ATP binding. Assembling and dissambling the active center during each catalytic cycle provides an effective means to prevent ATP hydrolysis.</text>
</comment>
<comment type="similarity">
    <text evidence="1">Belongs to the adenylate kinase family.</text>
</comment>
<comment type="sequence caution" evidence="2">
    <conflict type="erroneous initiation">
        <sequence resource="EMBL-CDS" id="AAD40604"/>
    </conflict>
</comment>
<name>KAD_LEPIN</name>
<proteinExistence type="inferred from homology"/>
<gene>
    <name evidence="1" type="primary">adk</name>
    <name type="ordered locus">LA_0760</name>
</gene>
<feature type="chain" id="PRO_0000158786" description="Adenylate kinase">
    <location>
        <begin position="1"/>
        <end position="187"/>
    </location>
</feature>
<feature type="region of interest" description="NMP" evidence="1">
    <location>
        <begin position="31"/>
        <end position="60"/>
    </location>
</feature>
<feature type="region of interest" description="LID" evidence="1">
    <location>
        <begin position="127"/>
        <end position="137"/>
    </location>
</feature>
<feature type="binding site" evidence="1">
    <location>
        <begin position="11"/>
        <end position="16"/>
    </location>
    <ligand>
        <name>ATP</name>
        <dbReference type="ChEBI" id="CHEBI:30616"/>
    </ligand>
</feature>
<feature type="binding site" evidence="1">
    <location>
        <position position="32"/>
    </location>
    <ligand>
        <name>AMP</name>
        <dbReference type="ChEBI" id="CHEBI:456215"/>
    </ligand>
</feature>
<feature type="binding site" evidence="1">
    <location>
        <position position="37"/>
    </location>
    <ligand>
        <name>AMP</name>
        <dbReference type="ChEBI" id="CHEBI:456215"/>
    </ligand>
</feature>
<feature type="binding site" evidence="1">
    <location>
        <begin position="58"/>
        <end position="60"/>
    </location>
    <ligand>
        <name>AMP</name>
        <dbReference type="ChEBI" id="CHEBI:456215"/>
    </ligand>
</feature>
<feature type="binding site" evidence="1">
    <location>
        <begin position="86"/>
        <end position="89"/>
    </location>
    <ligand>
        <name>AMP</name>
        <dbReference type="ChEBI" id="CHEBI:456215"/>
    </ligand>
</feature>
<feature type="binding site" evidence="1">
    <location>
        <position position="93"/>
    </location>
    <ligand>
        <name>AMP</name>
        <dbReference type="ChEBI" id="CHEBI:456215"/>
    </ligand>
</feature>
<feature type="binding site" evidence="1">
    <location>
        <position position="128"/>
    </location>
    <ligand>
        <name>ATP</name>
        <dbReference type="ChEBI" id="CHEBI:30616"/>
    </ligand>
</feature>
<feature type="binding site" evidence="1">
    <location>
        <position position="134"/>
    </location>
    <ligand>
        <name>AMP</name>
        <dbReference type="ChEBI" id="CHEBI:456215"/>
    </ligand>
</feature>
<feature type="binding site" evidence="1">
    <location>
        <position position="145"/>
    </location>
    <ligand>
        <name>AMP</name>
        <dbReference type="ChEBI" id="CHEBI:456215"/>
    </ligand>
</feature>
<feature type="binding site" evidence="1">
    <location>
        <position position="173"/>
    </location>
    <ligand>
        <name>ATP</name>
        <dbReference type="ChEBI" id="CHEBI:30616"/>
    </ligand>
</feature>
<accession>Q9XD15</accession>
<organism>
    <name type="scientific">Leptospira interrogans serogroup Icterohaemorrhagiae serovar Lai (strain 56601)</name>
    <dbReference type="NCBI Taxonomy" id="189518"/>
    <lineage>
        <taxon>Bacteria</taxon>
        <taxon>Pseudomonadati</taxon>
        <taxon>Spirochaetota</taxon>
        <taxon>Spirochaetia</taxon>
        <taxon>Leptospirales</taxon>
        <taxon>Leptospiraceae</taxon>
        <taxon>Leptospira</taxon>
    </lineage>
</organism>
<dbReference type="EC" id="2.7.4.3" evidence="1"/>
<dbReference type="EMBL" id="AF115283">
    <property type="protein sequence ID" value="AAD40604.1"/>
    <property type="status" value="ALT_INIT"/>
    <property type="molecule type" value="Genomic_DNA"/>
</dbReference>
<dbReference type="EMBL" id="AE010300">
    <property type="protein sequence ID" value="AAN47959.1"/>
    <property type="molecule type" value="Genomic_DNA"/>
</dbReference>
<dbReference type="RefSeq" id="NP_710941.1">
    <property type="nucleotide sequence ID" value="NC_004342.2"/>
</dbReference>
<dbReference type="RefSeq" id="WP_000789400.1">
    <property type="nucleotide sequence ID" value="NC_004342.2"/>
</dbReference>
<dbReference type="SMR" id="Q9XD15"/>
<dbReference type="FunCoup" id="Q9XD15">
    <property type="interactions" value="506"/>
</dbReference>
<dbReference type="STRING" id="189518.LA_0760"/>
<dbReference type="PaxDb" id="189518-LA_0760"/>
<dbReference type="EnsemblBacteria" id="AAN47959">
    <property type="protein sequence ID" value="AAN47959"/>
    <property type="gene ID" value="LA_0760"/>
</dbReference>
<dbReference type="KEGG" id="lil:LA_0760"/>
<dbReference type="PATRIC" id="fig|189518.3.peg.766"/>
<dbReference type="HOGENOM" id="CLU_032354_4_1_12"/>
<dbReference type="InParanoid" id="Q9XD15"/>
<dbReference type="OrthoDB" id="9805030at2"/>
<dbReference type="UniPathway" id="UPA00588">
    <property type="reaction ID" value="UER00649"/>
</dbReference>
<dbReference type="Proteomes" id="UP000001408">
    <property type="component" value="Chromosome I"/>
</dbReference>
<dbReference type="GO" id="GO:0005737">
    <property type="term" value="C:cytoplasm"/>
    <property type="evidence" value="ECO:0000318"/>
    <property type="project" value="GO_Central"/>
</dbReference>
<dbReference type="GO" id="GO:0005829">
    <property type="term" value="C:cytosol"/>
    <property type="evidence" value="ECO:0000318"/>
    <property type="project" value="GO_Central"/>
</dbReference>
<dbReference type="GO" id="GO:0004017">
    <property type="term" value="F:adenylate kinase activity"/>
    <property type="evidence" value="ECO:0000318"/>
    <property type="project" value="GO_Central"/>
</dbReference>
<dbReference type="GO" id="GO:0005524">
    <property type="term" value="F:ATP binding"/>
    <property type="evidence" value="ECO:0007669"/>
    <property type="project" value="UniProtKB-UniRule"/>
</dbReference>
<dbReference type="GO" id="GO:0004550">
    <property type="term" value="F:nucleoside diphosphate kinase activity"/>
    <property type="evidence" value="ECO:0000318"/>
    <property type="project" value="GO_Central"/>
</dbReference>
<dbReference type="GO" id="GO:0044209">
    <property type="term" value="P:AMP salvage"/>
    <property type="evidence" value="ECO:0007669"/>
    <property type="project" value="UniProtKB-UniRule"/>
</dbReference>
<dbReference type="GO" id="GO:0009132">
    <property type="term" value="P:nucleoside diphosphate metabolic process"/>
    <property type="evidence" value="ECO:0000318"/>
    <property type="project" value="GO_Central"/>
</dbReference>
<dbReference type="GO" id="GO:0009123">
    <property type="term" value="P:nucleoside monophosphate metabolic process"/>
    <property type="evidence" value="ECO:0000318"/>
    <property type="project" value="GO_Central"/>
</dbReference>
<dbReference type="CDD" id="cd01428">
    <property type="entry name" value="ADK"/>
    <property type="match status" value="1"/>
</dbReference>
<dbReference type="Gene3D" id="3.40.50.300">
    <property type="entry name" value="P-loop containing nucleotide triphosphate hydrolases"/>
    <property type="match status" value="1"/>
</dbReference>
<dbReference type="HAMAP" id="MF_00235">
    <property type="entry name" value="Adenylate_kinase_Adk"/>
    <property type="match status" value="1"/>
</dbReference>
<dbReference type="InterPro" id="IPR006259">
    <property type="entry name" value="Adenyl_kin_sub"/>
</dbReference>
<dbReference type="InterPro" id="IPR000850">
    <property type="entry name" value="Adenylat/UMP-CMP_kin"/>
</dbReference>
<dbReference type="InterPro" id="IPR033690">
    <property type="entry name" value="Adenylat_kinase_CS"/>
</dbReference>
<dbReference type="InterPro" id="IPR027417">
    <property type="entry name" value="P-loop_NTPase"/>
</dbReference>
<dbReference type="NCBIfam" id="TIGR01351">
    <property type="entry name" value="adk"/>
    <property type="match status" value="1"/>
</dbReference>
<dbReference type="NCBIfam" id="NF001381">
    <property type="entry name" value="PRK00279.1-3"/>
    <property type="match status" value="1"/>
</dbReference>
<dbReference type="NCBIfam" id="NF011100">
    <property type="entry name" value="PRK14527.1"/>
    <property type="match status" value="1"/>
</dbReference>
<dbReference type="NCBIfam" id="NF011101">
    <property type="entry name" value="PRK14528.1"/>
    <property type="match status" value="1"/>
</dbReference>
<dbReference type="NCBIfam" id="NF011104">
    <property type="entry name" value="PRK14531.1"/>
    <property type="match status" value="1"/>
</dbReference>
<dbReference type="NCBIfam" id="NF011105">
    <property type="entry name" value="PRK14532.1"/>
    <property type="match status" value="1"/>
</dbReference>
<dbReference type="PANTHER" id="PTHR23359">
    <property type="entry name" value="NUCLEOTIDE KINASE"/>
    <property type="match status" value="1"/>
</dbReference>
<dbReference type="Pfam" id="PF00406">
    <property type="entry name" value="ADK"/>
    <property type="match status" value="1"/>
</dbReference>
<dbReference type="PRINTS" id="PR00094">
    <property type="entry name" value="ADENYLTKNASE"/>
</dbReference>
<dbReference type="SUPFAM" id="SSF52540">
    <property type="entry name" value="P-loop containing nucleoside triphosphate hydrolases"/>
    <property type="match status" value="1"/>
</dbReference>
<dbReference type="PROSITE" id="PS00113">
    <property type="entry name" value="ADENYLATE_KINASE"/>
    <property type="match status" value="1"/>
</dbReference>
<reference key="1">
    <citation type="journal article" date="2000" name="FEMS Microbiol. Lett.">
        <title>Characterization of the Leptospira interrogans S10-spc-alpha operon.</title>
        <authorList>
            <person name="Zuerner R.L."/>
            <person name="Hartskeerl R.A."/>
            <person name="van de Kemp H."/>
            <person name="Bal A.E."/>
        </authorList>
    </citation>
    <scope>NUCLEOTIDE SEQUENCE [GENOMIC DNA]</scope>
    <source>
        <strain>Lai / Serogroup Icterohaemorrhagiae / Serovar lai</strain>
    </source>
</reference>
<reference key="2">
    <citation type="journal article" date="2003" name="Nature">
        <title>Unique physiological and pathogenic features of Leptospira interrogans revealed by whole-genome sequencing.</title>
        <authorList>
            <person name="Ren S.-X."/>
            <person name="Fu G."/>
            <person name="Jiang X.-G."/>
            <person name="Zeng R."/>
            <person name="Miao Y.-G."/>
            <person name="Xu H."/>
            <person name="Zhang Y.-X."/>
            <person name="Xiong H."/>
            <person name="Lu G."/>
            <person name="Lu L.-F."/>
            <person name="Jiang H.-Q."/>
            <person name="Jia J."/>
            <person name="Tu Y.-F."/>
            <person name="Jiang J.-X."/>
            <person name="Gu W.-Y."/>
            <person name="Zhang Y.-Q."/>
            <person name="Cai Z."/>
            <person name="Sheng H.-H."/>
            <person name="Yin H.-F."/>
            <person name="Zhang Y."/>
            <person name="Zhu G.-F."/>
            <person name="Wan M."/>
            <person name="Huang H.-L."/>
            <person name="Qian Z."/>
            <person name="Wang S.-Y."/>
            <person name="Ma W."/>
            <person name="Yao Z.-J."/>
            <person name="Shen Y."/>
            <person name="Qiang B.-Q."/>
            <person name="Xia Q.-C."/>
            <person name="Guo X.-K."/>
            <person name="Danchin A."/>
            <person name="Saint Girons I."/>
            <person name="Somerville R.L."/>
            <person name="Wen Y.-M."/>
            <person name="Shi M.-H."/>
            <person name="Chen Z."/>
            <person name="Xu J.-G."/>
            <person name="Zhao G.-P."/>
        </authorList>
    </citation>
    <scope>NUCLEOTIDE SEQUENCE [LARGE SCALE GENOMIC DNA]</scope>
    <source>
        <strain>56601</strain>
    </source>
</reference>
<protein>
    <recommendedName>
        <fullName evidence="1">Adenylate kinase</fullName>
        <shortName evidence="1">AK</shortName>
        <ecNumber evidence="1">2.7.4.3</ecNumber>
    </recommendedName>
    <alternativeName>
        <fullName evidence="1">ATP-AMP transphosphorylase</fullName>
    </alternativeName>
    <alternativeName>
        <fullName evidence="1">ATP:AMP phosphotransferase</fullName>
    </alternativeName>
    <alternativeName>
        <fullName evidence="1">Adenylate monophosphate kinase</fullName>
    </alternativeName>
</protein>
<evidence type="ECO:0000255" key="1">
    <source>
        <dbReference type="HAMAP-Rule" id="MF_00235"/>
    </source>
</evidence>
<evidence type="ECO:0000305" key="2"/>